<sequence>MAAQNEQRSERIKTTPYLEGDVLSSDSGPLLSVFALQEIMQKVRQVQADYMTATREVDFTVPDVQKILDDIKTLAAEQVYKIVKVPNILFRHIVMQSRDRVLRVDTYYEEMSQVGDVITEDEPEKFYSTIIKKVRFIRGKGSFILHDIPTRDHRGMEVAEPEVLGVEFKNVLPVLTAEHRAMIQNALDGSIIENGNVATRDVDVFIGACSEPIYRIYNRLQGYIEAVQLQELRNSIGWLERLGLRKRITYSQEVLTDFRRQDTIWVLALQLPVNPQVVWDVPRSSIANLIMNIATCLPTGEYIAPNPRISSITLTQRITTTGPFAILTGSTPTAQQLNDVRKIYLALMFPGQIILDLKIDPGERMDPAVRMVAGVVGHLLFTAGGRFTNLTQNMARQLDIALNDYLLYMYNTRVQVNYGPTGEPLDFQIGRNQYDCNVFRADFATGTGYNGWATIDVEYRDPAPYVHAQRYIRYCGIDSRELINPTTYGIGMTYHCYNEMLRMLVAAGKDSEAAYFRSMLPFHMVRFARINQIINEDLHSVFSLPDDMFNALLPDLIAGAHQNADPVVLDVSWISLWFAFNRSFEPTHRNEMLEIAPLIESVYASELSVMKVDMRHLSLMQRRFPDVLIQARPSHFWKAVLNDSPEAVKAVMNLSHSHNFINIRDMMRWVMLPSLQPSLKLVLEEEAWAAANDFEDLMLTDQVYMHRDMLPEPRLDDVERFRQEGFYYTNMLEAPPEIDRVVQYTYEIERLQANMGQFRAALRRIMDDDDWVRFGGVLRTVRVKFFDARPPDDILQGLPFSYDTNEKGGLSYATIKYATETTIFYQIYNAEFSNTPDSLVLINPTYTMTKVFINKRIVERVRVGQILAVLNRRFVAYKGKMRIMDITQSLKMGTKLAAPTV</sequence>
<gene>
    <name type="primary">Segment-3</name>
    <name type="synonym">L3</name>
</gene>
<proteinExistence type="inferred from homology"/>
<accession>Q65749</accession>
<reference key="1">
    <citation type="journal article" date="1994" name="Virus Res.">
        <title>Analyses and conservation of sequences among the cognate L3 segments of the five United States bluetongue viruses.</title>
        <authorList>
            <person name="Hwang G.-Y."/>
            <person name="Xiang M."/>
            <person name="Li J.K.-K."/>
        </authorList>
    </citation>
    <scope>NUCLEOTIDE SEQUENCE [GENOMIC RNA]</scope>
</reference>
<evidence type="ECO:0000305" key="1"/>
<feature type="chain" id="PRO_0000222696" description="Core protein VP3">
    <location>
        <begin position="1"/>
        <end position="901"/>
    </location>
</feature>
<keyword id="KW-0946">Virion</keyword>
<organism>
    <name type="scientific">Bluetongue virus 11 (isolate USA)</name>
    <name type="common">BTV 11</name>
    <dbReference type="NCBI Taxonomy" id="33716"/>
    <lineage>
        <taxon>Viruses</taxon>
        <taxon>Riboviria</taxon>
        <taxon>Orthornavirae</taxon>
        <taxon>Duplornaviricota</taxon>
        <taxon>Resentoviricetes</taxon>
        <taxon>Reovirales</taxon>
        <taxon>Sedoreoviridae</taxon>
        <taxon>Orbivirus</taxon>
        <taxon>Bluetongue virus</taxon>
    </lineage>
</organism>
<name>VP3_BTV11</name>
<comment type="function">
    <text>The VP3 protein is one of the five proteins (with VP1, VP4, VP6 and VP7) which form the inner capsid of the virus.</text>
</comment>
<comment type="subcellular location">
    <subcellularLocation>
        <location evidence="1">Virion</location>
    </subcellularLocation>
</comment>
<comment type="similarity">
    <text evidence="1">Belongs to the orbivirus VP3 family.</text>
</comment>
<organismHost>
    <name type="scientific">Antilocapra americana</name>
    <name type="common">Pronghorn</name>
    <dbReference type="NCBI Taxonomy" id="9891"/>
</organismHost>
<organismHost>
    <name type="scientific">Bos taurus</name>
    <name type="common">Bovine</name>
    <dbReference type="NCBI Taxonomy" id="9913"/>
</organismHost>
<organismHost>
    <name type="scientific">Capra hircus</name>
    <name type="common">Goat</name>
    <dbReference type="NCBI Taxonomy" id="9925"/>
</organismHost>
<organismHost>
    <name type="scientific">Culicoides variipennis</name>
    <name type="common">Biting midge</name>
    <dbReference type="NCBI Taxonomy" id="46212"/>
</organismHost>
<organismHost>
    <name type="scientific">Ovis aries</name>
    <name type="common">Sheep</name>
    <dbReference type="NCBI Taxonomy" id="9940"/>
</organismHost>
<protein>
    <recommendedName>
        <fullName>Core protein VP3</fullName>
    </recommendedName>
    <alternativeName>
        <fullName>Major inner capsid protein</fullName>
    </alternativeName>
</protein>
<dbReference type="EMBL" id="L19968">
    <property type="protein sequence ID" value="AAA42846.1"/>
    <property type="molecule type" value="Genomic_RNA"/>
</dbReference>
<dbReference type="SMR" id="Q65749"/>
<dbReference type="GO" id="GO:0044423">
    <property type="term" value="C:virion component"/>
    <property type="evidence" value="ECO:0007669"/>
    <property type="project" value="UniProtKB-KW"/>
</dbReference>
<dbReference type="GO" id="GO:0005198">
    <property type="term" value="F:structural molecule activity"/>
    <property type="evidence" value="ECO:0007669"/>
    <property type="project" value="InterPro"/>
</dbReference>
<dbReference type="InterPro" id="IPR002614">
    <property type="entry name" value="Inner_layer_core_VP3_Orbivir"/>
</dbReference>
<dbReference type="InterPro" id="IPR016029">
    <property type="entry name" value="Inner_layer_core_VP3_Reovir"/>
</dbReference>
<dbReference type="Pfam" id="PF01700">
    <property type="entry name" value="Orbi_VP3"/>
    <property type="match status" value="1"/>
</dbReference>
<dbReference type="SUPFAM" id="SSF56831">
    <property type="entry name" value="Reovirus inner layer core protein p3"/>
    <property type="match status" value="1"/>
</dbReference>